<reference evidence="4" key="1">
    <citation type="journal article" date="2016" name="Comp. Biochem. Physiol.">
        <title>Peptidomic analysis of the extensive array of host-defense peptides in skin secretions of the dodecaploid frog Xenopus ruwenzoriensis (Pipidae).</title>
        <authorList>
            <person name="Coquet L."/>
            <person name="Kolodziejek J."/>
            <person name="Jouenne T."/>
            <person name="Nowotny N."/>
            <person name="King J.D."/>
            <person name="Conlon J.M."/>
        </authorList>
    </citation>
    <scope>PROTEIN SEQUENCE</scope>
    <scope>SUBCELLULAR LOCATION</scope>
    <scope>MASS SPECTROMETRY</scope>
    <scope>AMIDATION AT LEU-21</scope>
    <source>
        <tissue evidence="3">Skin secretion</tissue>
    </source>
</reference>
<protein>
    <recommendedName>
        <fullName evidence="3">Peptide PGLa-R3</fullName>
    </recommendedName>
</protein>
<accession>C0HKP1</accession>
<comment type="function">
    <text evidence="1">Antimicrobial peptide.</text>
</comment>
<comment type="subcellular location">
    <subcellularLocation>
        <location evidence="2">Secreted</location>
    </subcellularLocation>
</comment>
<comment type="tissue specificity">
    <text evidence="5">Expressed by the skin glands.</text>
</comment>
<comment type="mass spectrometry"/>
<comment type="similarity">
    <text evidence="4">Belongs to the gastrin/cholecystokinin family. Magainin subfamily.</text>
</comment>
<name>PGLR3_XENRU</name>
<proteinExistence type="evidence at protein level"/>
<feature type="peptide" id="PRO_0000440928" description="Peptide PGLa-R3" evidence="2">
    <location>
        <begin position="1"/>
        <end position="21"/>
    </location>
</feature>
<feature type="modified residue" description="Leucine amide" evidence="2">
    <location>
        <position position="21"/>
    </location>
</feature>
<dbReference type="GO" id="GO:0005576">
    <property type="term" value="C:extracellular region"/>
    <property type="evidence" value="ECO:0007669"/>
    <property type="project" value="UniProtKB-SubCell"/>
</dbReference>
<dbReference type="GO" id="GO:0006952">
    <property type="term" value="P:defense response"/>
    <property type="evidence" value="ECO:0007669"/>
    <property type="project" value="UniProtKB-KW"/>
</dbReference>
<evidence type="ECO:0000250" key="1">
    <source>
        <dbReference type="UniProtKB" id="C0HK87"/>
    </source>
</evidence>
<evidence type="ECO:0000269" key="2">
    <source>
    </source>
</evidence>
<evidence type="ECO:0000303" key="3">
    <source>
    </source>
</evidence>
<evidence type="ECO:0000305" key="4"/>
<evidence type="ECO:0000305" key="5">
    <source>
    </source>
</evidence>
<organism evidence="3">
    <name type="scientific">Xenopus ruwenzoriensis</name>
    <name type="common">Uganda clawed frog</name>
    <dbReference type="NCBI Taxonomy" id="105430"/>
    <lineage>
        <taxon>Eukaryota</taxon>
        <taxon>Metazoa</taxon>
        <taxon>Chordata</taxon>
        <taxon>Craniata</taxon>
        <taxon>Vertebrata</taxon>
        <taxon>Euteleostomi</taxon>
        <taxon>Amphibia</taxon>
        <taxon>Batrachia</taxon>
        <taxon>Anura</taxon>
        <taxon>Pipoidea</taxon>
        <taxon>Pipidae</taxon>
        <taxon>Xenopodinae</taxon>
        <taxon>Xenopus</taxon>
        <taxon>Xenopus</taxon>
    </lineage>
</organism>
<keyword id="KW-0027">Amidation</keyword>
<keyword id="KW-0878">Amphibian defense peptide</keyword>
<keyword id="KW-0929">Antimicrobial</keyword>
<keyword id="KW-0903">Direct protein sequencing</keyword>
<keyword id="KW-0964">Secreted</keyword>
<sequence>GMASKAGTIVGKIAKVALNAL</sequence>